<organism>
    <name type="scientific">Helicobacter pylori (strain HPAG1)</name>
    <dbReference type="NCBI Taxonomy" id="357544"/>
    <lineage>
        <taxon>Bacteria</taxon>
        <taxon>Pseudomonadati</taxon>
        <taxon>Campylobacterota</taxon>
        <taxon>Epsilonproteobacteria</taxon>
        <taxon>Campylobacterales</taxon>
        <taxon>Helicobacteraceae</taxon>
        <taxon>Helicobacter</taxon>
    </lineage>
</organism>
<name>EFP_HELPH</name>
<feature type="chain" id="PRO_1000010761" description="Elongation factor P">
    <location>
        <begin position="1"/>
        <end position="187"/>
    </location>
</feature>
<evidence type="ECO:0000255" key="1">
    <source>
        <dbReference type="HAMAP-Rule" id="MF_00141"/>
    </source>
</evidence>
<sequence>MAIGMSELKKGLKIELGGVPYRIVEYQHVKPGKGAAFVRAKIKSFLDGKVIEKTFHAGDKCEEPNLVEKTMQYLYHDGDTYQFMDIESYEQIALNDSQVGEASKWMLDGMQVQVLLHNDKAISVDVPQVVALKIVETAPNFKGDTSSASKKPATLETGAVVQVPFHVLEGEVIKVNTETEEYLEKVK</sequence>
<protein>
    <recommendedName>
        <fullName evidence="1">Elongation factor P</fullName>
        <shortName evidence="1">EF-P</shortName>
    </recommendedName>
</protein>
<accession>Q1CUY2</accession>
<gene>
    <name evidence="1" type="primary">efp</name>
    <name type="ordered locus">HPAG1_0173</name>
</gene>
<dbReference type="EMBL" id="CP000241">
    <property type="protein sequence ID" value="ABF84240.1"/>
    <property type="molecule type" value="Genomic_DNA"/>
</dbReference>
<dbReference type="RefSeq" id="WP_000974267.1">
    <property type="nucleotide sequence ID" value="NC_008086.1"/>
</dbReference>
<dbReference type="SMR" id="Q1CUY2"/>
<dbReference type="KEGG" id="hpa:HPAG1_0173"/>
<dbReference type="HOGENOM" id="CLU_074944_0_1_7"/>
<dbReference type="UniPathway" id="UPA00345"/>
<dbReference type="GO" id="GO:0005737">
    <property type="term" value="C:cytoplasm"/>
    <property type="evidence" value="ECO:0007669"/>
    <property type="project" value="UniProtKB-SubCell"/>
</dbReference>
<dbReference type="GO" id="GO:0003746">
    <property type="term" value="F:translation elongation factor activity"/>
    <property type="evidence" value="ECO:0007669"/>
    <property type="project" value="UniProtKB-UniRule"/>
</dbReference>
<dbReference type="GO" id="GO:0043043">
    <property type="term" value="P:peptide biosynthetic process"/>
    <property type="evidence" value="ECO:0007669"/>
    <property type="project" value="InterPro"/>
</dbReference>
<dbReference type="CDD" id="cd04470">
    <property type="entry name" value="S1_EF-P_repeat_1"/>
    <property type="match status" value="1"/>
</dbReference>
<dbReference type="CDD" id="cd05794">
    <property type="entry name" value="S1_EF-P_repeat_2"/>
    <property type="match status" value="1"/>
</dbReference>
<dbReference type="FunFam" id="2.30.30.30:FF:000003">
    <property type="entry name" value="Elongation factor P"/>
    <property type="match status" value="1"/>
</dbReference>
<dbReference type="FunFam" id="2.40.50.140:FF:000004">
    <property type="entry name" value="Elongation factor P"/>
    <property type="match status" value="1"/>
</dbReference>
<dbReference type="FunFam" id="2.40.50.140:FF:000009">
    <property type="entry name" value="Elongation factor P"/>
    <property type="match status" value="1"/>
</dbReference>
<dbReference type="Gene3D" id="2.30.30.30">
    <property type="match status" value="1"/>
</dbReference>
<dbReference type="Gene3D" id="2.40.50.140">
    <property type="entry name" value="Nucleic acid-binding proteins"/>
    <property type="match status" value="2"/>
</dbReference>
<dbReference type="HAMAP" id="MF_00141">
    <property type="entry name" value="EF_P"/>
    <property type="match status" value="1"/>
</dbReference>
<dbReference type="InterPro" id="IPR015365">
    <property type="entry name" value="Elong-fact-P_C"/>
</dbReference>
<dbReference type="InterPro" id="IPR012340">
    <property type="entry name" value="NA-bd_OB-fold"/>
</dbReference>
<dbReference type="InterPro" id="IPR014722">
    <property type="entry name" value="Rib_uL2_dom2"/>
</dbReference>
<dbReference type="InterPro" id="IPR020599">
    <property type="entry name" value="Transl_elong_fac_P/YeiP"/>
</dbReference>
<dbReference type="InterPro" id="IPR013185">
    <property type="entry name" value="Transl_elong_KOW-like"/>
</dbReference>
<dbReference type="InterPro" id="IPR001059">
    <property type="entry name" value="Transl_elong_P/YeiP_cen"/>
</dbReference>
<dbReference type="InterPro" id="IPR013852">
    <property type="entry name" value="Transl_elong_P/YeiP_CS"/>
</dbReference>
<dbReference type="InterPro" id="IPR011768">
    <property type="entry name" value="Transl_elongation_fac_P"/>
</dbReference>
<dbReference type="InterPro" id="IPR008991">
    <property type="entry name" value="Translation_prot_SH3-like_sf"/>
</dbReference>
<dbReference type="NCBIfam" id="TIGR00038">
    <property type="entry name" value="efp"/>
    <property type="match status" value="1"/>
</dbReference>
<dbReference type="NCBIfam" id="NF001810">
    <property type="entry name" value="PRK00529.1"/>
    <property type="match status" value="1"/>
</dbReference>
<dbReference type="PANTHER" id="PTHR30053">
    <property type="entry name" value="ELONGATION FACTOR P"/>
    <property type="match status" value="1"/>
</dbReference>
<dbReference type="PANTHER" id="PTHR30053:SF12">
    <property type="entry name" value="ELONGATION FACTOR P (EF-P) FAMILY PROTEIN"/>
    <property type="match status" value="1"/>
</dbReference>
<dbReference type="Pfam" id="PF01132">
    <property type="entry name" value="EFP"/>
    <property type="match status" value="1"/>
</dbReference>
<dbReference type="Pfam" id="PF08207">
    <property type="entry name" value="EFP_N"/>
    <property type="match status" value="1"/>
</dbReference>
<dbReference type="Pfam" id="PF09285">
    <property type="entry name" value="Elong-fact-P_C"/>
    <property type="match status" value="1"/>
</dbReference>
<dbReference type="PIRSF" id="PIRSF005901">
    <property type="entry name" value="EF-P"/>
    <property type="match status" value="1"/>
</dbReference>
<dbReference type="SMART" id="SM01185">
    <property type="entry name" value="EFP"/>
    <property type="match status" value="1"/>
</dbReference>
<dbReference type="SMART" id="SM00841">
    <property type="entry name" value="Elong-fact-P_C"/>
    <property type="match status" value="1"/>
</dbReference>
<dbReference type="SUPFAM" id="SSF50249">
    <property type="entry name" value="Nucleic acid-binding proteins"/>
    <property type="match status" value="2"/>
</dbReference>
<dbReference type="SUPFAM" id="SSF50104">
    <property type="entry name" value="Translation proteins SH3-like domain"/>
    <property type="match status" value="1"/>
</dbReference>
<dbReference type="PROSITE" id="PS01275">
    <property type="entry name" value="EFP"/>
    <property type="match status" value="1"/>
</dbReference>
<keyword id="KW-0963">Cytoplasm</keyword>
<keyword id="KW-0251">Elongation factor</keyword>
<keyword id="KW-0648">Protein biosynthesis</keyword>
<comment type="function">
    <text evidence="1">Involved in peptide bond synthesis. Stimulates efficient translation and peptide-bond synthesis on native or reconstituted 70S ribosomes in vitro. Probably functions indirectly by altering the affinity of the ribosome for aminoacyl-tRNA, thus increasing their reactivity as acceptors for peptidyl transferase.</text>
</comment>
<comment type="pathway">
    <text evidence="1">Protein biosynthesis; polypeptide chain elongation.</text>
</comment>
<comment type="subcellular location">
    <subcellularLocation>
        <location evidence="1">Cytoplasm</location>
    </subcellularLocation>
</comment>
<comment type="similarity">
    <text evidence="1">Belongs to the elongation factor P family.</text>
</comment>
<reference key="1">
    <citation type="journal article" date="2006" name="Proc. Natl. Acad. Sci. U.S.A.">
        <title>The complete genome sequence of a chronic atrophic gastritis Helicobacter pylori strain: evolution during disease progression.</title>
        <authorList>
            <person name="Oh J.D."/>
            <person name="Kling-Baeckhed H."/>
            <person name="Giannakis M."/>
            <person name="Xu J."/>
            <person name="Fulton R.S."/>
            <person name="Fulton L.A."/>
            <person name="Cordum H.S."/>
            <person name="Wang C."/>
            <person name="Elliott G."/>
            <person name="Edwards J."/>
            <person name="Mardis E.R."/>
            <person name="Engstrand L.G."/>
            <person name="Gordon J.I."/>
        </authorList>
    </citation>
    <scope>NUCLEOTIDE SEQUENCE [LARGE SCALE GENOMIC DNA]</scope>
    <source>
        <strain>HPAG1</strain>
    </source>
</reference>
<proteinExistence type="inferred from homology"/>